<keyword id="KW-0175">Coiled coil</keyword>
<keyword id="KW-1185">Reference proteome</keyword>
<dbReference type="EMBL" id="CP001037">
    <property type="protein sequence ID" value="ACC83503.1"/>
    <property type="molecule type" value="Genomic_DNA"/>
</dbReference>
<dbReference type="RefSeq" id="WP_012411456.1">
    <property type="nucleotide sequence ID" value="NC_010628.1"/>
</dbReference>
<dbReference type="SMR" id="B2J353"/>
<dbReference type="STRING" id="63737.Npun_F5171"/>
<dbReference type="EnsemblBacteria" id="ACC83503">
    <property type="protein sequence ID" value="ACC83503"/>
    <property type="gene ID" value="Npun_F5171"/>
</dbReference>
<dbReference type="KEGG" id="npu:Npun_F5171"/>
<dbReference type="eggNOG" id="ENOG502Z86M">
    <property type="taxonomic scope" value="Bacteria"/>
</dbReference>
<dbReference type="HOGENOM" id="CLU_079763_1_0_3"/>
<dbReference type="OrthoDB" id="463078at2"/>
<dbReference type="PhylomeDB" id="B2J353"/>
<dbReference type="Proteomes" id="UP000001191">
    <property type="component" value="Chromosome"/>
</dbReference>
<dbReference type="GO" id="GO:0030096">
    <property type="term" value="C:plasma membrane-derived thylakoid photosystem II"/>
    <property type="evidence" value="ECO:0007669"/>
    <property type="project" value="TreeGrafter"/>
</dbReference>
<dbReference type="GO" id="GO:0010207">
    <property type="term" value="P:photosystem II assembly"/>
    <property type="evidence" value="ECO:0007669"/>
    <property type="project" value="InterPro"/>
</dbReference>
<dbReference type="HAMAP" id="MF_01843">
    <property type="entry name" value="Thf1"/>
    <property type="match status" value="1"/>
</dbReference>
<dbReference type="InterPro" id="IPR017499">
    <property type="entry name" value="Thf1"/>
</dbReference>
<dbReference type="NCBIfam" id="TIGR03060">
    <property type="entry name" value="PS_II_psb29"/>
    <property type="match status" value="1"/>
</dbReference>
<dbReference type="PANTHER" id="PTHR34793">
    <property type="entry name" value="PROTEIN THYLAKOID FORMATION 1, CHLOROPLASTIC"/>
    <property type="match status" value="1"/>
</dbReference>
<dbReference type="PANTHER" id="PTHR34793:SF1">
    <property type="entry name" value="PROTEIN THYLAKOID FORMATION 1, CHLOROPLASTIC"/>
    <property type="match status" value="1"/>
</dbReference>
<dbReference type="Pfam" id="PF11264">
    <property type="entry name" value="ThylakoidFormat"/>
    <property type="match status" value="1"/>
</dbReference>
<proteinExistence type="inferred from homology"/>
<protein>
    <recommendedName>
        <fullName evidence="1">Protein Thf1</fullName>
    </recommendedName>
</protein>
<reference key="1">
    <citation type="journal article" date="2013" name="Plant Physiol.">
        <title>A Nostoc punctiforme Sugar Transporter Necessary to Establish a Cyanobacterium-Plant Symbiosis.</title>
        <authorList>
            <person name="Ekman M."/>
            <person name="Picossi S."/>
            <person name="Campbell E.L."/>
            <person name="Meeks J.C."/>
            <person name="Flores E."/>
        </authorList>
    </citation>
    <scope>NUCLEOTIDE SEQUENCE [LARGE SCALE GENOMIC DNA]</scope>
    <source>
        <strain>ATCC 29133 / PCC 73102</strain>
    </source>
</reference>
<sequence length="235" mass="26936">MNNVRTVSDTKRTFYNLHTRPINTIYRRVVEELMVEMHLLSVNIDFSYNPIYALGVVTTFDRFMQGYEPERDQESIFNALCRAIEQDPQHYRQDAERLQAIAKGLPVKDLIGWLGQTTYLDRDADLQAQLQAIANNPNFKYNRLFAIGVFSLLEQSDPELVKDEKQLTEALKAIAAGLHVSDDKLNKDLELYRSNLDKMAQALVVMADMLSADRKKREQRKQQSTAPVAPPSSNE</sequence>
<name>THF1_NOSP7</name>
<evidence type="ECO:0000255" key="1">
    <source>
        <dbReference type="HAMAP-Rule" id="MF_01843"/>
    </source>
</evidence>
<evidence type="ECO:0000256" key="2">
    <source>
        <dbReference type="SAM" id="MobiDB-lite"/>
    </source>
</evidence>
<gene>
    <name evidence="1" type="primary">thf1</name>
    <name type="ordered locus">Npun_F5171</name>
</gene>
<accession>B2J353</accession>
<organism>
    <name type="scientific">Nostoc punctiforme (strain ATCC 29133 / PCC 73102)</name>
    <dbReference type="NCBI Taxonomy" id="63737"/>
    <lineage>
        <taxon>Bacteria</taxon>
        <taxon>Bacillati</taxon>
        <taxon>Cyanobacteriota</taxon>
        <taxon>Cyanophyceae</taxon>
        <taxon>Nostocales</taxon>
        <taxon>Nostocaceae</taxon>
        <taxon>Nostoc</taxon>
    </lineage>
</organism>
<feature type="chain" id="PRO_1000188427" description="Protein Thf1">
    <location>
        <begin position="1"/>
        <end position="235"/>
    </location>
</feature>
<feature type="region of interest" description="Disordered" evidence="2">
    <location>
        <begin position="213"/>
        <end position="235"/>
    </location>
</feature>
<feature type="coiled-coil region" evidence="1">
    <location>
        <begin position="183"/>
        <end position="204"/>
    </location>
</feature>
<feature type="compositionally biased region" description="Polar residues" evidence="2">
    <location>
        <begin position="222"/>
        <end position="235"/>
    </location>
</feature>
<comment type="function">
    <text evidence="1">May be involved in photosynthetic membrane biogenesis.</text>
</comment>
<comment type="similarity">
    <text evidence="1">Belongs to the THF1 family.</text>
</comment>